<comment type="subcellular location">
    <subcellularLocation>
        <location evidence="3">Membrane</location>
        <topology evidence="3">Multi-pass membrane protein</topology>
    </subcellularLocation>
    <text evidence="1">Immunolocalizes to the inclusion membrane, the membrane that surrounds the intracellular parasite. This protein is recognized by CD8+ T-cells in both human and mouse infections, suggesting it gains access to the host cytoplasm.</text>
</comment>
<dbReference type="EMBL" id="AE001273">
    <property type="protein sequence ID" value="AAC68041.1"/>
    <property type="molecule type" value="Genomic_DNA"/>
</dbReference>
<dbReference type="PIR" id="C71515">
    <property type="entry name" value="C71515"/>
</dbReference>
<dbReference type="RefSeq" id="NP_219954.1">
    <property type="nucleotide sequence ID" value="NC_000117.1"/>
</dbReference>
<dbReference type="RefSeq" id="WP_009872659.1">
    <property type="nucleotide sequence ID" value="NC_000117.1"/>
</dbReference>
<dbReference type="IntAct" id="O84449">
    <property type="interactions" value="2"/>
</dbReference>
<dbReference type="MINT" id="O84449"/>
<dbReference type="STRING" id="272561.CT_442"/>
<dbReference type="EnsemblBacteria" id="AAC68041">
    <property type="protein sequence ID" value="AAC68041"/>
    <property type="gene ID" value="CT_442"/>
</dbReference>
<dbReference type="GeneID" id="884215"/>
<dbReference type="KEGG" id="ctr:CT_442"/>
<dbReference type="PATRIC" id="fig|272561.5.peg.477"/>
<dbReference type="HOGENOM" id="CLU_1737288_0_0_0"/>
<dbReference type="InParanoid" id="O84449"/>
<dbReference type="OrthoDB" id="18131at2"/>
<dbReference type="Proteomes" id="UP000000431">
    <property type="component" value="Chromosome"/>
</dbReference>
<dbReference type="GO" id="GO:0019867">
    <property type="term" value="C:outer membrane"/>
    <property type="evidence" value="ECO:0007669"/>
    <property type="project" value="InterPro"/>
</dbReference>
<dbReference type="InterPro" id="IPR008436">
    <property type="entry name" value="CRPA"/>
</dbReference>
<dbReference type="Pfam" id="PF05745">
    <property type="entry name" value="CRPA"/>
    <property type="match status" value="1"/>
</dbReference>
<proteinExistence type="inferred from homology"/>
<organism>
    <name type="scientific">Chlamydia trachomatis serovar D (strain ATCC VR-885 / DSM 19411 / UW-3/Cx)</name>
    <dbReference type="NCBI Taxonomy" id="272561"/>
    <lineage>
        <taxon>Bacteria</taxon>
        <taxon>Pseudomonadati</taxon>
        <taxon>Chlamydiota</taxon>
        <taxon>Chlamydiia</taxon>
        <taxon>Chlamydiales</taxon>
        <taxon>Chlamydiaceae</taxon>
        <taxon>Chlamydia/Chlamydophila group</taxon>
        <taxon>Chlamydia</taxon>
    </lineage>
</organism>
<keyword id="KW-0472">Membrane</keyword>
<keyword id="KW-1185">Reference proteome</keyword>
<keyword id="KW-0812">Transmembrane</keyword>
<keyword id="KW-1133">Transmembrane helix</keyword>
<gene>
    <name type="primary">srp</name>
    <name type="synonym">crpA</name>
    <name type="ordered locus">CT_442</name>
</gene>
<protein>
    <recommendedName>
        <fullName>Sulfur-rich protein, serovar D</fullName>
    </recommendedName>
    <alternativeName>
        <fullName>15 kDa cysteine-rich outer membrane protein</fullName>
    </alternativeName>
    <alternativeName>
        <fullName>Cysteine-rich protein A</fullName>
    </alternativeName>
</protein>
<reference key="1">
    <citation type="journal article" date="1998" name="Science">
        <title>Genome sequence of an obligate intracellular pathogen of humans: Chlamydia trachomatis.</title>
        <authorList>
            <person name="Stephens R.S."/>
            <person name="Kalman S."/>
            <person name="Lammel C.J."/>
            <person name="Fan J."/>
            <person name="Marathe R."/>
            <person name="Aravind L."/>
            <person name="Mitchell W.P."/>
            <person name="Olinger L."/>
            <person name="Tatusov R.L."/>
            <person name="Zhao Q."/>
            <person name="Koonin E.V."/>
            <person name="Davis R.W."/>
        </authorList>
    </citation>
    <scope>NUCLEOTIDE SEQUENCE [LARGE SCALE GENOMIC DNA]</scope>
    <source>
        <strain>ATCC VR-885 / DSM 19411 / UW-3/Cx</strain>
    </source>
</reference>
<name>SRPD_CHLTR</name>
<accession>O84449</accession>
<sequence>MSTVPVVQGAGSSNSAQDISTRPLTLKERISNLLSSTAFKVGLVVIGLLLVIATLIFLVSAASFVNAIYLVAIPAILGCVNICVGILSMEGHCSPERWILCKKVLKTSEDIIDDGQINNSNKVFTDERLNAIGGVVESLSRRNSLVDQTQ</sequence>
<feature type="chain" id="PRO_0000207123" description="Sulfur-rich protein, serovar D">
    <location>
        <begin position="1"/>
        <end position="150"/>
    </location>
</feature>
<feature type="transmembrane region" description="Helical" evidence="2">
    <location>
        <begin position="41"/>
        <end position="61"/>
    </location>
</feature>
<feature type="transmembrane region" description="Helical" evidence="2">
    <location>
        <begin position="67"/>
        <end position="87"/>
    </location>
</feature>
<evidence type="ECO:0000250" key="1"/>
<evidence type="ECO:0000255" key="2"/>
<evidence type="ECO:0000305" key="3"/>